<gene>
    <name evidence="1" type="primary">grpE</name>
    <name type="ordered locus">Msm_1108</name>
</gene>
<proteinExistence type="inferred from homology"/>
<keyword id="KW-0143">Chaperone</keyword>
<keyword id="KW-0963">Cytoplasm</keyword>
<keyword id="KW-0346">Stress response</keyword>
<sequence>MANDKNEDQKEEETKTLQEKYDELLEELDSKNKELAKINEDLEKQKEETQEYISLSQRLQADFENFKKINEKKSKDIIKFANEPLIKNILDSYEDLERALENSKTEKELRDGVELIYSKIKDVLTKEGLEEIPAKGEKFDPFKHEALMVANDENVENGYIIDELMKGYTLKGKVIKYSKVRVCKK</sequence>
<reference key="1">
    <citation type="journal article" date="2007" name="Proc. Natl. Acad. Sci. U.S.A.">
        <title>Genomic and metabolic adaptations of Methanobrevibacter smithii to the human gut.</title>
        <authorList>
            <person name="Samuel B.S."/>
            <person name="Hansen E.E."/>
            <person name="Manchester J.K."/>
            <person name="Coutinho P.M."/>
            <person name="Henrissat B."/>
            <person name="Fulton R."/>
            <person name="Latreille P."/>
            <person name="Kim K."/>
            <person name="Wilson R.K."/>
            <person name="Gordon J.I."/>
        </authorList>
    </citation>
    <scope>NUCLEOTIDE SEQUENCE [LARGE SCALE GENOMIC DNA]</scope>
    <source>
        <strain>ATCC 35061 / DSM 861 / OCM 144 / PS</strain>
    </source>
</reference>
<comment type="function">
    <text evidence="1">Participates actively in the response to hyperosmotic and heat shock by preventing the aggregation of stress-denatured proteins, in association with DnaK and GrpE. It is the nucleotide exchange factor for DnaK and may function as a thermosensor. Unfolded proteins bind initially to DnaJ; upon interaction with the DnaJ-bound protein, DnaK hydrolyzes its bound ATP, resulting in the formation of a stable complex. GrpE releases ADP from DnaK; ATP binding to DnaK triggers the release of the substrate protein, thus completing the reaction cycle. Several rounds of ATP-dependent interactions between DnaJ, DnaK and GrpE are required for fully efficient folding.</text>
</comment>
<comment type="subunit">
    <text evidence="1">Homodimer.</text>
</comment>
<comment type="subcellular location">
    <subcellularLocation>
        <location evidence="1">Cytoplasm</location>
    </subcellularLocation>
</comment>
<comment type="similarity">
    <text evidence="1">Belongs to the GrpE family.</text>
</comment>
<accession>A5UM85</accession>
<organism>
    <name type="scientific">Methanobrevibacter smithii (strain ATCC 35061 / DSM 861 / OCM 144 / PS)</name>
    <dbReference type="NCBI Taxonomy" id="420247"/>
    <lineage>
        <taxon>Archaea</taxon>
        <taxon>Methanobacteriati</taxon>
        <taxon>Methanobacteriota</taxon>
        <taxon>Methanomada group</taxon>
        <taxon>Methanobacteria</taxon>
        <taxon>Methanobacteriales</taxon>
        <taxon>Methanobacteriaceae</taxon>
        <taxon>Methanobrevibacter</taxon>
    </lineage>
</organism>
<protein>
    <recommendedName>
        <fullName evidence="1">Protein GrpE</fullName>
    </recommendedName>
    <alternativeName>
        <fullName evidence="1">HSP-70 cofactor</fullName>
    </alternativeName>
</protein>
<feature type="chain" id="PRO_1000053605" description="Protein GrpE">
    <location>
        <begin position="1"/>
        <end position="185"/>
    </location>
</feature>
<dbReference type="EMBL" id="CP000678">
    <property type="protein sequence ID" value="ABQ87313.1"/>
    <property type="molecule type" value="Genomic_DNA"/>
</dbReference>
<dbReference type="RefSeq" id="WP_004032829.1">
    <property type="nucleotide sequence ID" value="NZ_CP117965.1"/>
</dbReference>
<dbReference type="SMR" id="A5UM85"/>
<dbReference type="STRING" id="420247.Msm_1108"/>
<dbReference type="EnsemblBacteria" id="ABQ87313">
    <property type="protein sequence ID" value="ABQ87313"/>
    <property type="gene ID" value="Msm_1108"/>
</dbReference>
<dbReference type="GeneID" id="78817753"/>
<dbReference type="KEGG" id="msi:Msm_1108"/>
<dbReference type="PATRIC" id="fig|420247.28.peg.1107"/>
<dbReference type="eggNOG" id="arCOG04772">
    <property type="taxonomic scope" value="Archaea"/>
</dbReference>
<dbReference type="HOGENOM" id="CLU_057217_5_2_2"/>
<dbReference type="Proteomes" id="UP000001992">
    <property type="component" value="Chromosome"/>
</dbReference>
<dbReference type="GO" id="GO:0005737">
    <property type="term" value="C:cytoplasm"/>
    <property type="evidence" value="ECO:0007669"/>
    <property type="project" value="UniProtKB-SubCell"/>
</dbReference>
<dbReference type="GO" id="GO:0000774">
    <property type="term" value="F:adenyl-nucleotide exchange factor activity"/>
    <property type="evidence" value="ECO:0007669"/>
    <property type="project" value="InterPro"/>
</dbReference>
<dbReference type="GO" id="GO:0042803">
    <property type="term" value="F:protein homodimerization activity"/>
    <property type="evidence" value="ECO:0007669"/>
    <property type="project" value="InterPro"/>
</dbReference>
<dbReference type="GO" id="GO:0051087">
    <property type="term" value="F:protein-folding chaperone binding"/>
    <property type="evidence" value="ECO:0007669"/>
    <property type="project" value="InterPro"/>
</dbReference>
<dbReference type="GO" id="GO:0051082">
    <property type="term" value="F:unfolded protein binding"/>
    <property type="evidence" value="ECO:0007669"/>
    <property type="project" value="TreeGrafter"/>
</dbReference>
<dbReference type="GO" id="GO:0006457">
    <property type="term" value="P:protein folding"/>
    <property type="evidence" value="ECO:0007669"/>
    <property type="project" value="InterPro"/>
</dbReference>
<dbReference type="CDD" id="cd00446">
    <property type="entry name" value="GrpE"/>
    <property type="match status" value="1"/>
</dbReference>
<dbReference type="Gene3D" id="3.90.20.20">
    <property type="match status" value="1"/>
</dbReference>
<dbReference type="Gene3D" id="2.30.22.10">
    <property type="entry name" value="Head domain of nucleotide exchange factor GrpE"/>
    <property type="match status" value="1"/>
</dbReference>
<dbReference type="HAMAP" id="MF_01151">
    <property type="entry name" value="GrpE"/>
    <property type="match status" value="1"/>
</dbReference>
<dbReference type="InterPro" id="IPR000740">
    <property type="entry name" value="GrpE"/>
</dbReference>
<dbReference type="InterPro" id="IPR013805">
    <property type="entry name" value="GrpE_coiled_coil"/>
</dbReference>
<dbReference type="InterPro" id="IPR009012">
    <property type="entry name" value="GrpE_head"/>
</dbReference>
<dbReference type="PANTHER" id="PTHR21237">
    <property type="entry name" value="GRPE PROTEIN"/>
    <property type="match status" value="1"/>
</dbReference>
<dbReference type="PANTHER" id="PTHR21237:SF23">
    <property type="entry name" value="GRPE PROTEIN HOMOLOG, MITOCHONDRIAL"/>
    <property type="match status" value="1"/>
</dbReference>
<dbReference type="Pfam" id="PF01025">
    <property type="entry name" value="GrpE"/>
    <property type="match status" value="1"/>
</dbReference>
<dbReference type="PRINTS" id="PR00773">
    <property type="entry name" value="GRPEPROTEIN"/>
</dbReference>
<dbReference type="SUPFAM" id="SSF58014">
    <property type="entry name" value="Coiled-coil domain of nucleotide exchange factor GrpE"/>
    <property type="match status" value="1"/>
</dbReference>
<dbReference type="SUPFAM" id="SSF51064">
    <property type="entry name" value="Head domain of nucleotide exchange factor GrpE"/>
    <property type="match status" value="1"/>
</dbReference>
<dbReference type="PROSITE" id="PS01071">
    <property type="entry name" value="GRPE"/>
    <property type="match status" value="1"/>
</dbReference>
<evidence type="ECO:0000255" key="1">
    <source>
        <dbReference type="HAMAP-Rule" id="MF_01151"/>
    </source>
</evidence>
<name>GRPE_METS3</name>